<keyword id="KW-0963">Cytoplasm</keyword>
<keyword id="KW-0378">Hydrolase</keyword>
<keyword id="KW-1185">Reference proteome</keyword>
<sequence length="117" mass="12584">MKMVVMVRTDINMGKGKIAAQVAHAAVSLVLDCMSRSSWRDWLDSWLHEGQPKVVVKVSSLEDLLSRVDKARSQGLPTTVISDAGRTQVEPGTVTCAGIGPGPDDLIDKITGDLKLL</sequence>
<proteinExistence type="inferred from homology"/>
<evidence type="ECO:0000255" key="1">
    <source>
        <dbReference type="HAMAP-Rule" id="MF_00628"/>
    </source>
</evidence>
<protein>
    <recommendedName>
        <fullName evidence="1">Peptidyl-tRNA hydrolase</fullName>
        <shortName evidence="1">PTH</shortName>
        <ecNumber evidence="1">3.1.1.29</ecNumber>
    </recommendedName>
</protein>
<organism>
    <name type="scientific">Metallosphaera sedula (strain ATCC 51363 / DSM 5348 / JCM 9185 / NBRC 15509 / TH2)</name>
    <dbReference type="NCBI Taxonomy" id="399549"/>
    <lineage>
        <taxon>Archaea</taxon>
        <taxon>Thermoproteota</taxon>
        <taxon>Thermoprotei</taxon>
        <taxon>Sulfolobales</taxon>
        <taxon>Sulfolobaceae</taxon>
        <taxon>Metallosphaera</taxon>
    </lineage>
</organism>
<feature type="chain" id="PRO_1000072659" description="Peptidyl-tRNA hydrolase">
    <location>
        <begin position="1"/>
        <end position="117"/>
    </location>
</feature>
<accession>A4YD82</accession>
<dbReference type="EC" id="3.1.1.29" evidence="1"/>
<dbReference type="EMBL" id="CP000682">
    <property type="protein sequence ID" value="ABP94384.1"/>
    <property type="molecule type" value="Genomic_DNA"/>
</dbReference>
<dbReference type="SMR" id="A4YD82"/>
<dbReference type="STRING" id="399549.Msed_0207"/>
<dbReference type="KEGG" id="mse:Msed_0207"/>
<dbReference type="eggNOG" id="arCOG04228">
    <property type="taxonomic scope" value="Archaea"/>
</dbReference>
<dbReference type="HOGENOM" id="CLU_073661_2_2_2"/>
<dbReference type="Proteomes" id="UP000000242">
    <property type="component" value="Chromosome"/>
</dbReference>
<dbReference type="GO" id="GO:0005829">
    <property type="term" value="C:cytosol"/>
    <property type="evidence" value="ECO:0007669"/>
    <property type="project" value="TreeGrafter"/>
</dbReference>
<dbReference type="GO" id="GO:0004045">
    <property type="term" value="F:peptidyl-tRNA hydrolase activity"/>
    <property type="evidence" value="ECO:0007669"/>
    <property type="project" value="UniProtKB-UniRule"/>
</dbReference>
<dbReference type="GO" id="GO:0006412">
    <property type="term" value="P:translation"/>
    <property type="evidence" value="ECO:0007669"/>
    <property type="project" value="UniProtKB-UniRule"/>
</dbReference>
<dbReference type="CDD" id="cd02430">
    <property type="entry name" value="PTH2"/>
    <property type="match status" value="1"/>
</dbReference>
<dbReference type="FunFam" id="3.40.1490.10:FF:000001">
    <property type="entry name" value="Peptidyl-tRNA hydrolase 2"/>
    <property type="match status" value="1"/>
</dbReference>
<dbReference type="Gene3D" id="3.40.1490.10">
    <property type="entry name" value="Bit1"/>
    <property type="match status" value="1"/>
</dbReference>
<dbReference type="HAMAP" id="MF_00628">
    <property type="entry name" value="Pept_tRNA_hydro_arch"/>
    <property type="match status" value="1"/>
</dbReference>
<dbReference type="InterPro" id="IPR023476">
    <property type="entry name" value="Pep_tRNA_hydro_II_dom_sf"/>
</dbReference>
<dbReference type="InterPro" id="IPR034759">
    <property type="entry name" value="Pept_tRNA_hydro_arch"/>
</dbReference>
<dbReference type="InterPro" id="IPR002833">
    <property type="entry name" value="PTH2"/>
</dbReference>
<dbReference type="NCBIfam" id="TIGR00283">
    <property type="entry name" value="arch_pth2"/>
    <property type="match status" value="1"/>
</dbReference>
<dbReference type="NCBIfam" id="NF003314">
    <property type="entry name" value="PRK04322.1"/>
    <property type="match status" value="1"/>
</dbReference>
<dbReference type="PANTHER" id="PTHR12649">
    <property type="entry name" value="PEPTIDYL-TRNA HYDROLASE 2"/>
    <property type="match status" value="1"/>
</dbReference>
<dbReference type="PANTHER" id="PTHR12649:SF11">
    <property type="entry name" value="PEPTIDYL-TRNA HYDROLASE 2, MITOCHONDRIAL"/>
    <property type="match status" value="1"/>
</dbReference>
<dbReference type="Pfam" id="PF01981">
    <property type="entry name" value="PTH2"/>
    <property type="match status" value="1"/>
</dbReference>
<dbReference type="SUPFAM" id="SSF102462">
    <property type="entry name" value="Peptidyl-tRNA hydrolase II"/>
    <property type="match status" value="1"/>
</dbReference>
<name>PTH_METS5</name>
<reference key="1">
    <citation type="journal article" date="2008" name="Appl. Environ. Microbiol.">
        <title>The genome sequence of the metal-mobilizing, extremely thermoacidophilic archaeon Metallosphaera sedula provides insights into bioleaching-associated metabolism.</title>
        <authorList>
            <person name="Auernik K.S."/>
            <person name="Maezato Y."/>
            <person name="Blum P.H."/>
            <person name="Kelly R.M."/>
        </authorList>
    </citation>
    <scope>NUCLEOTIDE SEQUENCE [LARGE SCALE GENOMIC DNA]</scope>
    <source>
        <strain>ATCC 51363 / DSM 5348 / JCM 9185 / NBRC 15509 / TH2</strain>
    </source>
</reference>
<gene>
    <name evidence="1" type="primary">pth</name>
    <name type="ordered locus">Msed_0207</name>
</gene>
<comment type="function">
    <text evidence="1">The natural substrate for this enzyme may be peptidyl-tRNAs which drop off the ribosome during protein synthesis.</text>
</comment>
<comment type="catalytic activity">
    <reaction evidence="1">
        <text>an N-acyl-L-alpha-aminoacyl-tRNA + H2O = an N-acyl-L-amino acid + a tRNA + H(+)</text>
        <dbReference type="Rhea" id="RHEA:54448"/>
        <dbReference type="Rhea" id="RHEA-COMP:10123"/>
        <dbReference type="Rhea" id="RHEA-COMP:13883"/>
        <dbReference type="ChEBI" id="CHEBI:15377"/>
        <dbReference type="ChEBI" id="CHEBI:15378"/>
        <dbReference type="ChEBI" id="CHEBI:59874"/>
        <dbReference type="ChEBI" id="CHEBI:78442"/>
        <dbReference type="ChEBI" id="CHEBI:138191"/>
        <dbReference type="EC" id="3.1.1.29"/>
    </reaction>
</comment>
<comment type="subcellular location">
    <subcellularLocation>
        <location evidence="1">Cytoplasm</location>
    </subcellularLocation>
</comment>
<comment type="similarity">
    <text evidence="1">Belongs to the PTH2 family.</text>
</comment>